<protein>
    <recommendedName>
        <fullName evidence="1">ATP synthase gamma chain</fullName>
    </recommendedName>
    <alternativeName>
        <fullName evidence="1">ATP synthase F1 sector gamma subunit</fullName>
    </alternativeName>
    <alternativeName>
        <fullName evidence="1">F-ATPase gamma subunit</fullName>
    </alternativeName>
</protein>
<dbReference type="EMBL" id="CP000766">
    <property type="protein sequence ID" value="ABY73177.1"/>
    <property type="molecule type" value="Genomic_DNA"/>
</dbReference>
<dbReference type="RefSeq" id="WP_012151344.1">
    <property type="nucleotide sequence ID" value="NC_010263.3"/>
</dbReference>
<dbReference type="SMR" id="B0BVB7"/>
<dbReference type="GeneID" id="79937846"/>
<dbReference type="KEGG" id="rrj:RrIowa_1446"/>
<dbReference type="eggNOG" id="COG0224">
    <property type="taxonomic scope" value="Bacteria"/>
</dbReference>
<dbReference type="HOGENOM" id="CLU_050669_0_1_5"/>
<dbReference type="Proteomes" id="UP000000796">
    <property type="component" value="Chromosome"/>
</dbReference>
<dbReference type="GO" id="GO:0005886">
    <property type="term" value="C:plasma membrane"/>
    <property type="evidence" value="ECO:0007669"/>
    <property type="project" value="UniProtKB-SubCell"/>
</dbReference>
<dbReference type="GO" id="GO:0045259">
    <property type="term" value="C:proton-transporting ATP synthase complex"/>
    <property type="evidence" value="ECO:0007669"/>
    <property type="project" value="UniProtKB-KW"/>
</dbReference>
<dbReference type="GO" id="GO:0005524">
    <property type="term" value="F:ATP binding"/>
    <property type="evidence" value="ECO:0007669"/>
    <property type="project" value="UniProtKB-UniRule"/>
</dbReference>
<dbReference type="GO" id="GO:0046933">
    <property type="term" value="F:proton-transporting ATP synthase activity, rotational mechanism"/>
    <property type="evidence" value="ECO:0007669"/>
    <property type="project" value="UniProtKB-UniRule"/>
</dbReference>
<dbReference type="GO" id="GO:0042777">
    <property type="term" value="P:proton motive force-driven plasma membrane ATP synthesis"/>
    <property type="evidence" value="ECO:0007669"/>
    <property type="project" value="UniProtKB-UniRule"/>
</dbReference>
<dbReference type="CDD" id="cd12151">
    <property type="entry name" value="F1-ATPase_gamma"/>
    <property type="match status" value="1"/>
</dbReference>
<dbReference type="Gene3D" id="3.40.1380.10">
    <property type="match status" value="1"/>
</dbReference>
<dbReference type="Gene3D" id="1.10.287.80">
    <property type="entry name" value="ATP synthase, gamma subunit, helix hairpin domain"/>
    <property type="match status" value="2"/>
</dbReference>
<dbReference type="HAMAP" id="MF_00815">
    <property type="entry name" value="ATP_synth_gamma_bact"/>
    <property type="match status" value="1"/>
</dbReference>
<dbReference type="InterPro" id="IPR035968">
    <property type="entry name" value="ATP_synth_F1_ATPase_gsu"/>
</dbReference>
<dbReference type="InterPro" id="IPR000131">
    <property type="entry name" value="ATP_synth_F1_gsu"/>
</dbReference>
<dbReference type="InterPro" id="IPR022436">
    <property type="entry name" value="RPE2"/>
</dbReference>
<dbReference type="NCBIfam" id="TIGR01146">
    <property type="entry name" value="ATPsyn_F1gamma"/>
    <property type="match status" value="1"/>
</dbReference>
<dbReference type="NCBIfam" id="TIGR03774">
    <property type="entry name" value="RPE2"/>
    <property type="match status" value="1"/>
</dbReference>
<dbReference type="PANTHER" id="PTHR11693">
    <property type="entry name" value="ATP SYNTHASE GAMMA CHAIN"/>
    <property type="match status" value="1"/>
</dbReference>
<dbReference type="PANTHER" id="PTHR11693:SF22">
    <property type="entry name" value="ATP SYNTHASE SUBUNIT GAMMA, MITOCHONDRIAL"/>
    <property type="match status" value="1"/>
</dbReference>
<dbReference type="Pfam" id="PF00231">
    <property type="entry name" value="ATP-synt"/>
    <property type="match status" value="1"/>
</dbReference>
<dbReference type="PRINTS" id="PR00126">
    <property type="entry name" value="ATPASEGAMMA"/>
</dbReference>
<dbReference type="SUPFAM" id="SSF52943">
    <property type="entry name" value="ATP synthase (F1-ATPase), gamma subunit"/>
    <property type="match status" value="1"/>
</dbReference>
<feature type="chain" id="PRO_1000083802" description="ATP synthase gamma chain">
    <location>
        <begin position="1"/>
        <end position="323"/>
    </location>
</feature>
<gene>
    <name evidence="1" type="primary">atpG</name>
    <name type="ordered locus">RrIowa_1446</name>
</gene>
<accession>B0BVB7</accession>
<evidence type="ECO:0000255" key="1">
    <source>
        <dbReference type="HAMAP-Rule" id="MF_00815"/>
    </source>
</evidence>
<sequence length="323" mass="36636">MSNLKQLRTRIKSVKSTQKITKAMQLVSASKMAKIKSQIANSNFYIEAVSKMMSAILSIDMYELSIEEQKFFNTVPNKANLLIVMTSQRGLCGTFNYSIIQQVKNDIKELENKGEQIKLIIIGKKGYEALKRQYVNYIDSYFELPKIHDENLMLQVKQKIMSAVENLEVSNCVIYFNKFKNAMTQIMTRQQILPVAKYQDDSMIDNPIVNLVGFGYKERGAKPINNRSATSDIVGESKSIDYNYEYEGENLISNLINLYVNSQINYALLQSRASEEGARMTAMENATNNANDLISKLVLKLNRSRQAIITTELIEIIAGSEAV</sequence>
<organism>
    <name type="scientific">Rickettsia rickettsii (strain Iowa)</name>
    <dbReference type="NCBI Taxonomy" id="452659"/>
    <lineage>
        <taxon>Bacteria</taxon>
        <taxon>Pseudomonadati</taxon>
        <taxon>Pseudomonadota</taxon>
        <taxon>Alphaproteobacteria</taxon>
        <taxon>Rickettsiales</taxon>
        <taxon>Rickettsiaceae</taxon>
        <taxon>Rickettsieae</taxon>
        <taxon>Rickettsia</taxon>
        <taxon>spotted fever group</taxon>
    </lineage>
</organism>
<comment type="function">
    <text evidence="1">Produces ATP from ADP in the presence of a proton gradient across the membrane. The gamma chain is believed to be important in regulating ATPase activity and the flow of protons through the CF(0) complex.</text>
</comment>
<comment type="subunit">
    <text evidence="1">F-type ATPases have 2 components, CF(1) - the catalytic core - and CF(0) - the membrane proton channel. CF(1) has five subunits: alpha(3), beta(3), gamma(1), delta(1), epsilon(1). CF(0) has three main subunits: a, b and c.</text>
</comment>
<comment type="subcellular location">
    <subcellularLocation>
        <location evidence="1">Cell inner membrane</location>
        <topology evidence="1">Peripheral membrane protein</topology>
    </subcellularLocation>
</comment>
<comment type="similarity">
    <text evidence="1">Belongs to the ATPase gamma chain family.</text>
</comment>
<reference key="1">
    <citation type="journal article" date="2008" name="Infect. Immun.">
        <title>Genomic comparison of virulent Rickettsia rickettsii Sheila Smith and avirulent Rickettsia rickettsii Iowa.</title>
        <authorList>
            <person name="Ellison D.W."/>
            <person name="Clark T.R."/>
            <person name="Sturdevant D.E."/>
            <person name="Virtaneva K."/>
            <person name="Porcella S.F."/>
            <person name="Hackstadt T."/>
        </authorList>
    </citation>
    <scope>NUCLEOTIDE SEQUENCE [LARGE SCALE GENOMIC DNA]</scope>
    <source>
        <strain>Iowa</strain>
    </source>
</reference>
<name>ATPG_RICRO</name>
<proteinExistence type="inferred from homology"/>
<keyword id="KW-0066">ATP synthesis</keyword>
<keyword id="KW-0997">Cell inner membrane</keyword>
<keyword id="KW-1003">Cell membrane</keyword>
<keyword id="KW-0139">CF(1)</keyword>
<keyword id="KW-0375">Hydrogen ion transport</keyword>
<keyword id="KW-0406">Ion transport</keyword>
<keyword id="KW-0472">Membrane</keyword>
<keyword id="KW-0813">Transport</keyword>